<keyword id="KW-0066">ATP synthesis</keyword>
<keyword id="KW-0067">ATP-binding</keyword>
<keyword id="KW-0997">Cell inner membrane</keyword>
<keyword id="KW-1003">Cell membrane</keyword>
<keyword id="KW-0139">CF(1)</keyword>
<keyword id="KW-0375">Hydrogen ion transport</keyword>
<keyword id="KW-0406">Ion transport</keyword>
<keyword id="KW-0472">Membrane</keyword>
<keyword id="KW-0547">Nucleotide-binding</keyword>
<keyword id="KW-1278">Translocase</keyword>
<keyword id="KW-0813">Transport</keyword>
<evidence type="ECO:0000255" key="1">
    <source>
        <dbReference type="HAMAP-Rule" id="MF_01347"/>
    </source>
</evidence>
<reference key="1">
    <citation type="journal article" date="2007" name="PLoS ONE">
        <title>Complete genomic characterization of a pathogenic A.II strain of Francisella tularensis subspecies tularensis.</title>
        <authorList>
            <person name="Beckstrom-Sternberg S.M."/>
            <person name="Auerbach R.K."/>
            <person name="Godbole S."/>
            <person name="Pearson J.V."/>
            <person name="Beckstrom-Sternberg J.S."/>
            <person name="Deng Z."/>
            <person name="Munk C."/>
            <person name="Kubota K."/>
            <person name="Zhou Y."/>
            <person name="Bruce D."/>
            <person name="Noronha J."/>
            <person name="Scheuermann R.H."/>
            <person name="Wang A."/>
            <person name="Wei X."/>
            <person name="Wang J."/>
            <person name="Hao J."/>
            <person name="Wagner D.M."/>
            <person name="Brettin T.S."/>
            <person name="Brown N."/>
            <person name="Gilna P."/>
            <person name="Keim P.S."/>
        </authorList>
    </citation>
    <scope>NUCLEOTIDE SEQUENCE [LARGE SCALE GENOMIC DNA]</scope>
    <source>
        <strain>WY96-3418</strain>
    </source>
</reference>
<feature type="chain" id="PRO_1000055115" description="ATP synthase subunit beta">
    <location>
        <begin position="1"/>
        <end position="458"/>
    </location>
</feature>
<feature type="binding site" evidence="1">
    <location>
        <begin position="148"/>
        <end position="155"/>
    </location>
    <ligand>
        <name>ATP</name>
        <dbReference type="ChEBI" id="CHEBI:30616"/>
    </ligand>
</feature>
<gene>
    <name evidence="1" type="primary">atpD</name>
    <name type="ordered locus">FTW_0140</name>
</gene>
<comment type="function">
    <text evidence="1">Produces ATP from ADP in the presence of a proton gradient across the membrane. The catalytic sites are hosted primarily by the beta subunits.</text>
</comment>
<comment type="catalytic activity">
    <reaction evidence="1">
        <text>ATP + H2O + 4 H(+)(in) = ADP + phosphate + 5 H(+)(out)</text>
        <dbReference type="Rhea" id="RHEA:57720"/>
        <dbReference type="ChEBI" id="CHEBI:15377"/>
        <dbReference type="ChEBI" id="CHEBI:15378"/>
        <dbReference type="ChEBI" id="CHEBI:30616"/>
        <dbReference type="ChEBI" id="CHEBI:43474"/>
        <dbReference type="ChEBI" id="CHEBI:456216"/>
        <dbReference type="EC" id="7.1.2.2"/>
    </reaction>
</comment>
<comment type="subunit">
    <text evidence="1">F-type ATPases have 2 components, CF(1) - the catalytic core - and CF(0) - the membrane proton channel. CF(1) has five subunits: alpha(3), beta(3), gamma(1), delta(1), epsilon(1). CF(0) has three main subunits: a(1), b(2) and c(9-12). The alpha and beta chains form an alternating ring which encloses part of the gamma chain. CF(1) is attached to CF(0) by a central stalk formed by the gamma and epsilon chains, while a peripheral stalk is formed by the delta and b chains.</text>
</comment>
<comment type="subcellular location">
    <subcellularLocation>
        <location evidence="1">Cell inner membrane</location>
        <topology evidence="1">Peripheral membrane protein</topology>
    </subcellularLocation>
</comment>
<comment type="similarity">
    <text evidence="1">Belongs to the ATPase alpha/beta chains family.</text>
</comment>
<dbReference type="EC" id="7.1.2.2" evidence="1"/>
<dbReference type="EMBL" id="CP000608">
    <property type="protein sequence ID" value="ABO46126.1"/>
    <property type="molecule type" value="Genomic_DNA"/>
</dbReference>
<dbReference type="RefSeq" id="WP_003019768.1">
    <property type="nucleotide sequence ID" value="NC_009257.1"/>
</dbReference>
<dbReference type="SMR" id="A4IW24"/>
<dbReference type="GeneID" id="75264623"/>
<dbReference type="KEGG" id="ftw:FTW_0140"/>
<dbReference type="HOGENOM" id="CLU_022398_0_2_6"/>
<dbReference type="GO" id="GO:0005886">
    <property type="term" value="C:plasma membrane"/>
    <property type="evidence" value="ECO:0007669"/>
    <property type="project" value="UniProtKB-SubCell"/>
</dbReference>
<dbReference type="GO" id="GO:0045259">
    <property type="term" value="C:proton-transporting ATP synthase complex"/>
    <property type="evidence" value="ECO:0007669"/>
    <property type="project" value="UniProtKB-KW"/>
</dbReference>
<dbReference type="GO" id="GO:0005524">
    <property type="term" value="F:ATP binding"/>
    <property type="evidence" value="ECO:0007669"/>
    <property type="project" value="UniProtKB-UniRule"/>
</dbReference>
<dbReference type="GO" id="GO:0016887">
    <property type="term" value="F:ATP hydrolysis activity"/>
    <property type="evidence" value="ECO:0007669"/>
    <property type="project" value="InterPro"/>
</dbReference>
<dbReference type="GO" id="GO:0046933">
    <property type="term" value="F:proton-transporting ATP synthase activity, rotational mechanism"/>
    <property type="evidence" value="ECO:0007669"/>
    <property type="project" value="UniProtKB-UniRule"/>
</dbReference>
<dbReference type="CDD" id="cd18110">
    <property type="entry name" value="ATP-synt_F1_beta_C"/>
    <property type="match status" value="1"/>
</dbReference>
<dbReference type="CDD" id="cd18115">
    <property type="entry name" value="ATP-synt_F1_beta_N"/>
    <property type="match status" value="1"/>
</dbReference>
<dbReference type="CDD" id="cd01133">
    <property type="entry name" value="F1-ATPase_beta_CD"/>
    <property type="match status" value="1"/>
</dbReference>
<dbReference type="FunFam" id="1.10.1140.10:FF:000001">
    <property type="entry name" value="ATP synthase subunit beta"/>
    <property type="match status" value="1"/>
</dbReference>
<dbReference type="FunFam" id="2.40.10.170:FF:000003">
    <property type="entry name" value="ATP synthase subunit beta"/>
    <property type="match status" value="1"/>
</dbReference>
<dbReference type="FunFam" id="3.40.50.300:FF:000004">
    <property type="entry name" value="ATP synthase subunit beta"/>
    <property type="match status" value="1"/>
</dbReference>
<dbReference type="Gene3D" id="2.40.10.170">
    <property type="match status" value="1"/>
</dbReference>
<dbReference type="Gene3D" id="1.10.1140.10">
    <property type="entry name" value="Bovine Mitochondrial F1-atpase, Atp Synthase Beta Chain, Chain D, domain 3"/>
    <property type="match status" value="1"/>
</dbReference>
<dbReference type="Gene3D" id="3.40.50.300">
    <property type="entry name" value="P-loop containing nucleotide triphosphate hydrolases"/>
    <property type="match status" value="1"/>
</dbReference>
<dbReference type="HAMAP" id="MF_01347">
    <property type="entry name" value="ATP_synth_beta_bact"/>
    <property type="match status" value="1"/>
</dbReference>
<dbReference type="InterPro" id="IPR003593">
    <property type="entry name" value="AAA+_ATPase"/>
</dbReference>
<dbReference type="InterPro" id="IPR055190">
    <property type="entry name" value="ATP-synt_VA_C"/>
</dbReference>
<dbReference type="InterPro" id="IPR005722">
    <property type="entry name" value="ATP_synth_F1_bsu"/>
</dbReference>
<dbReference type="InterPro" id="IPR020003">
    <property type="entry name" value="ATPase_a/bsu_AS"/>
</dbReference>
<dbReference type="InterPro" id="IPR050053">
    <property type="entry name" value="ATPase_alpha/beta_chains"/>
</dbReference>
<dbReference type="InterPro" id="IPR004100">
    <property type="entry name" value="ATPase_F1/V1/A1_a/bsu_N"/>
</dbReference>
<dbReference type="InterPro" id="IPR036121">
    <property type="entry name" value="ATPase_F1/V1/A1_a/bsu_N_sf"/>
</dbReference>
<dbReference type="InterPro" id="IPR000194">
    <property type="entry name" value="ATPase_F1/V1/A1_a/bsu_nucl-bd"/>
</dbReference>
<dbReference type="InterPro" id="IPR024034">
    <property type="entry name" value="ATPase_F1/V1_b/a_C"/>
</dbReference>
<dbReference type="InterPro" id="IPR027417">
    <property type="entry name" value="P-loop_NTPase"/>
</dbReference>
<dbReference type="NCBIfam" id="TIGR01039">
    <property type="entry name" value="atpD"/>
    <property type="match status" value="1"/>
</dbReference>
<dbReference type="PANTHER" id="PTHR15184">
    <property type="entry name" value="ATP SYNTHASE"/>
    <property type="match status" value="1"/>
</dbReference>
<dbReference type="PANTHER" id="PTHR15184:SF71">
    <property type="entry name" value="ATP SYNTHASE SUBUNIT BETA, MITOCHONDRIAL"/>
    <property type="match status" value="1"/>
</dbReference>
<dbReference type="Pfam" id="PF00006">
    <property type="entry name" value="ATP-synt_ab"/>
    <property type="match status" value="1"/>
</dbReference>
<dbReference type="Pfam" id="PF02874">
    <property type="entry name" value="ATP-synt_ab_N"/>
    <property type="match status" value="1"/>
</dbReference>
<dbReference type="Pfam" id="PF22919">
    <property type="entry name" value="ATP-synt_VA_C"/>
    <property type="match status" value="1"/>
</dbReference>
<dbReference type="SMART" id="SM00382">
    <property type="entry name" value="AAA"/>
    <property type="match status" value="1"/>
</dbReference>
<dbReference type="SUPFAM" id="SSF47917">
    <property type="entry name" value="C-terminal domain of alpha and beta subunits of F1 ATP synthase"/>
    <property type="match status" value="1"/>
</dbReference>
<dbReference type="SUPFAM" id="SSF50615">
    <property type="entry name" value="N-terminal domain of alpha and beta subunits of F1 ATP synthase"/>
    <property type="match status" value="1"/>
</dbReference>
<dbReference type="SUPFAM" id="SSF52540">
    <property type="entry name" value="P-loop containing nucleoside triphosphate hydrolases"/>
    <property type="match status" value="1"/>
</dbReference>
<dbReference type="PROSITE" id="PS00152">
    <property type="entry name" value="ATPASE_ALPHA_BETA"/>
    <property type="match status" value="1"/>
</dbReference>
<name>ATPB_FRATW</name>
<organism>
    <name type="scientific">Francisella tularensis subsp. tularensis (strain WY96-3418)</name>
    <dbReference type="NCBI Taxonomy" id="418136"/>
    <lineage>
        <taxon>Bacteria</taxon>
        <taxon>Pseudomonadati</taxon>
        <taxon>Pseudomonadota</taxon>
        <taxon>Gammaproteobacteria</taxon>
        <taxon>Thiotrichales</taxon>
        <taxon>Francisellaceae</taxon>
        <taxon>Francisella</taxon>
    </lineage>
</organism>
<sequence>MSTGKIIQVIGAVIDVEFARDNTPKVYDALNVVEAGLVLEVQQQIGDGVVRTIAMGSSDGLRRGMEVKNTNAPISVPVGHGTLGRIMNVLGEPIDEAGPIEYTEKRSIHQAPPAYDELALSTEILETGIKVVDLICPFAKGGKVGLFGGAGVGKTVTMMELINNIAKEHSGYSVFAGVGERTREGNDFYYEMKDSNVLDKVSLVYGQMNEPPGNRLRVALSGLTIAEGFRDEKRDVLMFIDNIYRYTLAGTEVSALLGRMPSAVGYQPTLAAEMGALQERITSTKTGSITSVQAVYVPADDLTDPSPATTFSHLDATIVLSRQIAELGIYPAVDPLDSTSRQLDPLVVGQDHYETARAVQKVLQRYKELKDIIAILGMDELSDEDKKIVDRARKIQRFLSQPFHVAEVFTGNPGKFVSLKDTVASFKAIVNGEYDHLPEQAFYMVGSIQEAIEKAKTL</sequence>
<accession>A4IW24</accession>
<proteinExistence type="inferred from homology"/>
<protein>
    <recommendedName>
        <fullName evidence="1">ATP synthase subunit beta</fullName>
        <ecNumber evidence="1">7.1.2.2</ecNumber>
    </recommendedName>
    <alternativeName>
        <fullName evidence="1">ATP synthase F1 sector subunit beta</fullName>
    </alternativeName>
    <alternativeName>
        <fullName evidence="1">F-ATPase subunit beta</fullName>
    </alternativeName>
</protein>